<keyword id="KW-0028">Amino-acid biosynthesis</keyword>
<keyword id="KW-0057">Aromatic amino acid biosynthesis</keyword>
<keyword id="KW-0210">Decarboxylase</keyword>
<keyword id="KW-0456">Lyase</keyword>
<keyword id="KW-1185">Reference proteome</keyword>
<keyword id="KW-0822">Tryptophan biosynthesis</keyword>
<feature type="chain" id="PRO_0000154222" description="Indole-3-glycerol phosphate synthase">
    <location>
        <begin position="1"/>
        <end position="262"/>
    </location>
</feature>
<organism>
    <name type="scientific">Clostridium acetobutylicum (strain ATCC 824 / DSM 792 / JCM 1419 / IAM 19013 / LMG 5710 / NBRC 13948 / NRRL B-527 / VKM B-1787 / 2291 / W)</name>
    <dbReference type="NCBI Taxonomy" id="272562"/>
    <lineage>
        <taxon>Bacteria</taxon>
        <taxon>Bacillati</taxon>
        <taxon>Bacillota</taxon>
        <taxon>Clostridia</taxon>
        <taxon>Eubacteriales</taxon>
        <taxon>Clostridiaceae</taxon>
        <taxon>Clostridium</taxon>
    </lineage>
</organism>
<evidence type="ECO:0000255" key="1">
    <source>
        <dbReference type="HAMAP-Rule" id="MF_00134"/>
    </source>
</evidence>
<reference key="1">
    <citation type="journal article" date="2001" name="J. Bacteriol.">
        <title>Genome sequence and comparative analysis of the solvent-producing bacterium Clostridium acetobutylicum.</title>
        <authorList>
            <person name="Noelling J."/>
            <person name="Breton G."/>
            <person name="Omelchenko M.V."/>
            <person name="Makarova K.S."/>
            <person name="Zeng Q."/>
            <person name="Gibson R."/>
            <person name="Lee H.M."/>
            <person name="Dubois J."/>
            <person name="Qiu D."/>
            <person name="Hitti J."/>
            <person name="Wolf Y.I."/>
            <person name="Tatusov R.L."/>
            <person name="Sabathe F."/>
            <person name="Doucette-Stamm L.A."/>
            <person name="Soucaille P."/>
            <person name="Daly M.J."/>
            <person name="Bennett G.N."/>
            <person name="Koonin E.V."/>
            <person name="Smith D.R."/>
        </authorList>
    </citation>
    <scope>NUCLEOTIDE SEQUENCE [LARGE SCALE GENOMIC DNA]</scope>
    <source>
        <strain>ATCC 824 / DSM 792 / JCM 1419 / IAM 19013 / LMG 5710 / NBRC 13948 / NRRL B-527 / VKM B-1787 / 2291 / W</strain>
    </source>
</reference>
<comment type="catalytic activity">
    <reaction evidence="1">
        <text>1-(2-carboxyphenylamino)-1-deoxy-D-ribulose 5-phosphate + H(+) = (1S,2R)-1-C-(indol-3-yl)glycerol 3-phosphate + CO2 + H2O</text>
        <dbReference type="Rhea" id="RHEA:23476"/>
        <dbReference type="ChEBI" id="CHEBI:15377"/>
        <dbReference type="ChEBI" id="CHEBI:15378"/>
        <dbReference type="ChEBI" id="CHEBI:16526"/>
        <dbReference type="ChEBI" id="CHEBI:58613"/>
        <dbReference type="ChEBI" id="CHEBI:58866"/>
        <dbReference type="EC" id="4.1.1.48"/>
    </reaction>
</comment>
<comment type="pathway">
    <text evidence="1">Amino-acid biosynthesis; L-tryptophan biosynthesis; L-tryptophan from chorismate: step 4/5.</text>
</comment>
<comment type="similarity">
    <text evidence="1">Belongs to the TrpC family.</text>
</comment>
<name>TRPC_CLOAB</name>
<gene>
    <name evidence="1" type="primary">trpC</name>
    <name type="ordered locus">CA_C3160</name>
</gene>
<sequence>MILDDIVRDKKLQLIEDKKALSLDDIKSKLNSLNLDKRNFKEALEKENISIIAEIKKASPSKGVIREDFNPVKIGQIYENINIDAVSILTEKKYFLGKNEYIKIVKEVNSKPILRKDFIVDEYQLYEAKLIGADAVLLIAAVLKDKLECFYNRTLELGLDSITEVHNEEEAKLASEIGCSIIGINNRDLRDFSTDITTTKRLMKYVPRDRIIVSESSIKTPEDILYLRSIGVNAVLIGETFMRNIDDLKGINEFLKKAKDNG</sequence>
<dbReference type="EC" id="4.1.1.48" evidence="1"/>
<dbReference type="EMBL" id="AE001437">
    <property type="protein sequence ID" value="AAK81097.1"/>
    <property type="molecule type" value="Genomic_DNA"/>
</dbReference>
<dbReference type="PIR" id="F97288">
    <property type="entry name" value="F97288"/>
</dbReference>
<dbReference type="RefSeq" id="NP_349757.1">
    <property type="nucleotide sequence ID" value="NC_003030.1"/>
</dbReference>
<dbReference type="RefSeq" id="WP_010966437.1">
    <property type="nucleotide sequence ID" value="NC_003030.1"/>
</dbReference>
<dbReference type="SMR" id="Q97EF3"/>
<dbReference type="STRING" id="272562.CA_C3160"/>
<dbReference type="GeneID" id="44999648"/>
<dbReference type="KEGG" id="cac:CA_C3160"/>
<dbReference type="PATRIC" id="fig|272562.8.peg.3341"/>
<dbReference type="eggNOG" id="COG0134">
    <property type="taxonomic scope" value="Bacteria"/>
</dbReference>
<dbReference type="HOGENOM" id="CLU_034247_2_0_9"/>
<dbReference type="OrthoDB" id="9804217at2"/>
<dbReference type="UniPathway" id="UPA00035">
    <property type="reaction ID" value="UER00043"/>
</dbReference>
<dbReference type="Proteomes" id="UP000000814">
    <property type="component" value="Chromosome"/>
</dbReference>
<dbReference type="GO" id="GO:0004425">
    <property type="term" value="F:indole-3-glycerol-phosphate synthase activity"/>
    <property type="evidence" value="ECO:0007669"/>
    <property type="project" value="UniProtKB-UniRule"/>
</dbReference>
<dbReference type="GO" id="GO:0004640">
    <property type="term" value="F:phosphoribosylanthranilate isomerase activity"/>
    <property type="evidence" value="ECO:0007669"/>
    <property type="project" value="TreeGrafter"/>
</dbReference>
<dbReference type="GO" id="GO:0000162">
    <property type="term" value="P:L-tryptophan biosynthetic process"/>
    <property type="evidence" value="ECO:0007669"/>
    <property type="project" value="UniProtKB-UniRule"/>
</dbReference>
<dbReference type="CDD" id="cd00331">
    <property type="entry name" value="IGPS"/>
    <property type="match status" value="1"/>
</dbReference>
<dbReference type="FunFam" id="3.20.20.70:FF:000024">
    <property type="entry name" value="Indole-3-glycerol phosphate synthase"/>
    <property type="match status" value="1"/>
</dbReference>
<dbReference type="Gene3D" id="3.20.20.70">
    <property type="entry name" value="Aldolase class I"/>
    <property type="match status" value="1"/>
</dbReference>
<dbReference type="HAMAP" id="MF_00134_B">
    <property type="entry name" value="IGPS_B"/>
    <property type="match status" value="1"/>
</dbReference>
<dbReference type="InterPro" id="IPR013785">
    <property type="entry name" value="Aldolase_TIM"/>
</dbReference>
<dbReference type="InterPro" id="IPR045186">
    <property type="entry name" value="Indole-3-glycerol_P_synth"/>
</dbReference>
<dbReference type="InterPro" id="IPR013798">
    <property type="entry name" value="Indole-3-glycerol_P_synth_dom"/>
</dbReference>
<dbReference type="InterPro" id="IPR001468">
    <property type="entry name" value="Indole-3-GlycerolPSynthase_CS"/>
</dbReference>
<dbReference type="InterPro" id="IPR011060">
    <property type="entry name" value="RibuloseP-bd_barrel"/>
</dbReference>
<dbReference type="NCBIfam" id="NF001377">
    <property type="entry name" value="PRK00278.2-4"/>
    <property type="match status" value="1"/>
</dbReference>
<dbReference type="PANTHER" id="PTHR22854:SF2">
    <property type="entry name" value="INDOLE-3-GLYCEROL-PHOSPHATE SYNTHASE"/>
    <property type="match status" value="1"/>
</dbReference>
<dbReference type="PANTHER" id="PTHR22854">
    <property type="entry name" value="TRYPTOPHAN BIOSYNTHESIS PROTEIN"/>
    <property type="match status" value="1"/>
</dbReference>
<dbReference type="Pfam" id="PF00218">
    <property type="entry name" value="IGPS"/>
    <property type="match status" value="1"/>
</dbReference>
<dbReference type="SUPFAM" id="SSF51366">
    <property type="entry name" value="Ribulose-phoshate binding barrel"/>
    <property type="match status" value="1"/>
</dbReference>
<dbReference type="PROSITE" id="PS00614">
    <property type="entry name" value="IGPS"/>
    <property type="match status" value="1"/>
</dbReference>
<protein>
    <recommendedName>
        <fullName evidence="1">Indole-3-glycerol phosphate synthase</fullName>
        <shortName evidence="1">IGPS</shortName>
        <ecNumber evidence="1">4.1.1.48</ecNumber>
    </recommendedName>
</protein>
<accession>Q97EF3</accession>
<proteinExistence type="inferred from homology"/>